<feature type="chain" id="PRO_0000303752" description="Exodeoxyribonuclease 7 small subunit">
    <location>
        <begin position="1"/>
        <end position="76"/>
    </location>
</feature>
<evidence type="ECO:0000255" key="1">
    <source>
        <dbReference type="HAMAP-Rule" id="MF_00337"/>
    </source>
</evidence>
<accession>Q2FGL1</accession>
<keyword id="KW-0963">Cytoplasm</keyword>
<keyword id="KW-0269">Exonuclease</keyword>
<keyword id="KW-0378">Hydrolase</keyword>
<keyword id="KW-0540">Nuclease</keyword>
<protein>
    <recommendedName>
        <fullName evidence="1">Exodeoxyribonuclease 7 small subunit</fullName>
        <ecNumber evidence="1">3.1.11.6</ecNumber>
    </recommendedName>
    <alternativeName>
        <fullName evidence="1">Exodeoxyribonuclease VII small subunit</fullName>
        <shortName evidence="1">Exonuclease VII small subunit</shortName>
    </alternativeName>
</protein>
<reference key="1">
    <citation type="journal article" date="2006" name="Lancet">
        <title>Complete genome sequence of USA300, an epidemic clone of community-acquired meticillin-resistant Staphylococcus aureus.</title>
        <authorList>
            <person name="Diep B.A."/>
            <person name="Gill S.R."/>
            <person name="Chang R.F."/>
            <person name="Phan T.H."/>
            <person name="Chen J.H."/>
            <person name="Davidson M.G."/>
            <person name="Lin F."/>
            <person name="Lin J."/>
            <person name="Carleton H.A."/>
            <person name="Mongodin E.F."/>
            <person name="Sensabaugh G.F."/>
            <person name="Perdreau-Remington F."/>
        </authorList>
    </citation>
    <scope>NUCLEOTIDE SEQUENCE [LARGE SCALE GENOMIC DNA]</scope>
    <source>
        <strain>USA300</strain>
    </source>
</reference>
<proteinExistence type="inferred from homology"/>
<name>EX7S_STAA3</name>
<gene>
    <name evidence="1" type="primary">xseB</name>
    <name type="ordered locus">SAUSA300_1471</name>
</gene>
<comment type="function">
    <text evidence="1">Bidirectionally degrades single-stranded DNA into large acid-insoluble oligonucleotides, which are then degraded further into small acid-soluble oligonucleotides.</text>
</comment>
<comment type="catalytic activity">
    <reaction evidence="1">
        <text>Exonucleolytic cleavage in either 5'- to 3'- or 3'- to 5'-direction to yield nucleoside 5'-phosphates.</text>
        <dbReference type="EC" id="3.1.11.6"/>
    </reaction>
</comment>
<comment type="subunit">
    <text evidence="1">Heterooligomer composed of large and small subunits.</text>
</comment>
<comment type="subcellular location">
    <subcellularLocation>
        <location evidence="1">Cytoplasm</location>
    </subcellularLocation>
</comment>
<comment type="similarity">
    <text evidence="1">Belongs to the XseB family.</text>
</comment>
<dbReference type="EC" id="3.1.11.6" evidence="1"/>
<dbReference type="EMBL" id="CP000255">
    <property type="protein sequence ID" value="ABD20453.1"/>
    <property type="molecule type" value="Genomic_DNA"/>
</dbReference>
<dbReference type="RefSeq" id="WP_000159865.1">
    <property type="nucleotide sequence ID" value="NZ_CP027476.1"/>
</dbReference>
<dbReference type="SMR" id="Q2FGL1"/>
<dbReference type="KEGG" id="saa:SAUSA300_1471"/>
<dbReference type="HOGENOM" id="CLU_145918_3_2_9"/>
<dbReference type="OMA" id="PLNDYKG"/>
<dbReference type="Proteomes" id="UP000001939">
    <property type="component" value="Chromosome"/>
</dbReference>
<dbReference type="GO" id="GO:0005829">
    <property type="term" value="C:cytosol"/>
    <property type="evidence" value="ECO:0007669"/>
    <property type="project" value="TreeGrafter"/>
</dbReference>
<dbReference type="GO" id="GO:0009318">
    <property type="term" value="C:exodeoxyribonuclease VII complex"/>
    <property type="evidence" value="ECO:0007669"/>
    <property type="project" value="InterPro"/>
</dbReference>
<dbReference type="GO" id="GO:0008855">
    <property type="term" value="F:exodeoxyribonuclease VII activity"/>
    <property type="evidence" value="ECO:0007669"/>
    <property type="project" value="UniProtKB-UniRule"/>
</dbReference>
<dbReference type="GO" id="GO:0006308">
    <property type="term" value="P:DNA catabolic process"/>
    <property type="evidence" value="ECO:0007669"/>
    <property type="project" value="UniProtKB-UniRule"/>
</dbReference>
<dbReference type="FunFam" id="1.10.287.1040:FF:000006">
    <property type="entry name" value="Exodeoxyribonuclease 7 small subunit"/>
    <property type="match status" value="1"/>
</dbReference>
<dbReference type="Gene3D" id="1.10.287.1040">
    <property type="entry name" value="Exonuclease VII, small subunit"/>
    <property type="match status" value="1"/>
</dbReference>
<dbReference type="HAMAP" id="MF_00337">
    <property type="entry name" value="Exonuc_7_S"/>
    <property type="match status" value="1"/>
</dbReference>
<dbReference type="InterPro" id="IPR003761">
    <property type="entry name" value="Exonuc_VII_S"/>
</dbReference>
<dbReference type="InterPro" id="IPR037004">
    <property type="entry name" value="Exonuc_VII_ssu_sf"/>
</dbReference>
<dbReference type="NCBIfam" id="NF002140">
    <property type="entry name" value="PRK00977.1-4"/>
    <property type="match status" value="1"/>
</dbReference>
<dbReference type="NCBIfam" id="NF010671">
    <property type="entry name" value="PRK14068.1"/>
    <property type="match status" value="1"/>
</dbReference>
<dbReference type="NCBIfam" id="TIGR01280">
    <property type="entry name" value="xseB"/>
    <property type="match status" value="1"/>
</dbReference>
<dbReference type="PANTHER" id="PTHR34137">
    <property type="entry name" value="EXODEOXYRIBONUCLEASE 7 SMALL SUBUNIT"/>
    <property type="match status" value="1"/>
</dbReference>
<dbReference type="PANTHER" id="PTHR34137:SF1">
    <property type="entry name" value="EXODEOXYRIBONUCLEASE 7 SMALL SUBUNIT"/>
    <property type="match status" value="1"/>
</dbReference>
<dbReference type="Pfam" id="PF02609">
    <property type="entry name" value="Exonuc_VII_S"/>
    <property type="match status" value="1"/>
</dbReference>
<dbReference type="PIRSF" id="PIRSF006488">
    <property type="entry name" value="Exonuc_VII_S"/>
    <property type="match status" value="1"/>
</dbReference>
<dbReference type="SUPFAM" id="SSF116842">
    <property type="entry name" value="XseB-like"/>
    <property type="match status" value="1"/>
</dbReference>
<sequence>MTKETQSFEEMMQELEQIVQKLDNETVSLEESLDLYQRGMKLSAACDTTLKNAEKKVNDLIKEEAEDVKNDESTDE</sequence>
<organism>
    <name type="scientific">Staphylococcus aureus (strain USA300)</name>
    <dbReference type="NCBI Taxonomy" id="367830"/>
    <lineage>
        <taxon>Bacteria</taxon>
        <taxon>Bacillati</taxon>
        <taxon>Bacillota</taxon>
        <taxon>Bacilli</taxon>
        <taxon>Bacillales</taxon>
        <taxon>Staphylococcaceae</taxon>
        <taxon>Staphylococcus</taxon>
    </lineage>
</organism>